<comment type="function">
    <text evidence="1">Essential for the assembly of the photosystem I (PSI) complex. May act as a chaperone-like factor to guide the assembly of the PSI subunits.</text>
</comment>
<comment type="subcellular location">
    <subcellularLocation>
        <location evidence="1">Plastid</location>
        <location evidence="1">Chloroplast thylakoid membrane</location>
        <topology evidence="1">Peripheral membrane protein</topology>
    </subcellularLocation>
</comment>
<comment type="similarity">
    <text evidence="1">Belongs to the Ycf3 family.</text>
</comment>
<protein>
    <recommendedName>
        <fullName evidence="1">Photosystem I assembly protein Ycf3</fullName>
    </recommendedName>
</protein>
<gene>
    <name evidence="1" type="primary">ycf3</name>
</gene>
<evidence type="ECO:0000255" key="1">
    <source>
        <dbReference type="HAMAP-Rule" id="MF_00439"/>
    </source>
</evidence>
<organism>
    <name type="scientific">Calycanthus floridus var. glaucus</name>
    <name type="common">Eastern sweetshrub</name>
    <name type="synonym">Calycanthus fertilis var. ferax</name>
    <dbReference type="NCBI Taxonomy" id="212734"/>
    <lineage>
        <taxon>Eukaryota</taxon>
        <taxon>Viridiplantae</taxon>
        <taxon>Streptophyta</taxon>
        <taxon>Embryophyta</taxon>
        <taxon>Tracheophyta</taxon>
        <taxon>Spermatophyta</taxon>
        <taxon>Magnoliopsida</taxon>
        <taxon>Magnoliidae</taxon>
        <taxon>Laurales</taxon>
        <taxon>Calycanthaceae</taxon>
        <taxon>Calycanthus</taxon>
    </lineage>
</organism>
<accession>Q7YJX1</accession>
<geneLocation type="chloroplast"/>
<sequence length="168" mass="19415">MPRSRINGNFIDKTSSIVANILLRIIPTTSGEKEAFTYYRDGMSAQSEGNYAEALQNYYEATRLEIDPYDRSYILYNIGLIHTSNGEHTKALEYYFRAIERNPFLPQAFNNMAVICHYRGEQAIRQGDSEIAEAWSDQAAEYWKQAIALTPGNYIEAHNWLKIARRFE</sequence>
<feature type="chain" id="PRO_0000217795" description="Photosystem I assembly protein Ycf3">
    <location>
        <begin position="1"/>
        <end position="168"/>
    </location>
</feature>
<feature type="repeat" description="TPR 1">
    <location>
        <begin position="35"/>
        <end position="68"/>
    </location>
</feature>
<feature type="repeat" description="TPR 2">
    <location>
        <begin position="72"/>
        <end position="105"/>
    </location>
</feature>
<feature type="repeat" description="TPR 3">
    <location>
        <begin position="120"/>
        <end position="153"/>
    </location>
</feature>
<reference key="1">
    <citation type="journal article" date="2003" name="Plant Syst. Evol.">
        <title>The chloroplast genome of the 'basal' angiosperm Calycanthus fertilis -- structural and phylogenetic analyses.</title>
        <authorList>
            <person name="Goremykin V."/>
            <person name="Hirsch-Ernst K.I."/>
            <person name="Woelfl S."/>
            <person name="Hellwig F.H."/>
        </authorList>
    </citation>
    <scope>NUCLEOTIDE SEQUENCE [LARGE SCALE GENOMIC DNA]</scope>
</reference>
<dbReference type="EMBL" id="AJ428413">
    <property type="protein sequence ID" value="CAD28722.1"/>
    <property type="molecule type" value="Genomic_DNA"/>
</dbReference>
<dbReference type="RefSeq" id="NP_862755.1">
    <property type="nucleotide sequence ID" value="NC_004993.1"/>
</dbReference>
<dbReference type="SMR" id="Q7YJX1"/>
<dbReference type="GeneID" id="2598091"/>
<dbReference type="GO" id="GO:0009535">
    <property type="term" value="C:chloroplast thylakoid membrane"/>
    <property type="evidence" value="ECO:0007669"/>
    <property type="project" value="UniProtKB-SubCell"/>
</dbReference>
<dbReference type="GO" id="GO:0015979">
    <property type="term" value="P:photosynthesis"/>
    <property type="evidence" value="ECO:0007669"/>
    <property type="project" value="UniProtKB-UniRule"/>
</dbReference>
<dbReference type="FunFam" id="1.25.40.10:FF:000004">
    <property type="entry name" value="Photosystem I assembly protein Ycf3"/>
    <property type="match status" value="1"/>
</dbReference>
<dbReference type="Gene3D" id="1.25.40.10">
    <property type="entry name" value="Tetratricopeptide repeat domain"/>
    <property type="match status" value="1"/>
</dbReference>
<dbReference type="HAMAP" id="MF_00439">
    <property type="entry name" value="Ycf3"/>
    <property type="match status" value="1"/>
</dbReference>
<dbReference type="InterPro" id="IPR022818">
    <property type="entry name" value="PSI_Ycf3_assembly"/>
</dbReference>
<dbReference type="InterPro" id="IPR011990">
    <property type="entry name" value="TPR-like_helical_dom_sf"/>
</dbReference>
<dbReference type="InterPro" id="IPR019734">
    <property type="entry name" value="TPR_rpt"/>
</dbReference>
<dbReference type="InterPro" id="IPR051685">
    <property type="entry name" value="Ycf3/AcsC/BcsC/TPR_MFPF"/>
</dbReference>
<dbReference type="NCBIfam" id="NF002725">
    <property type="entry name" value="PRK02603.1"/>
    <property type="match status" value="1"/>
</dbReference>
<dbReference type="PANTHER" id="PTHR44943">
    <property type="entry name" value="CELLULOSE SYNTHASE OPERON PROTEIN C"/>
    <property type="match status" value="1"/>
</dbReference>
<dbReference type="PANTHER" id="PTHR44943:SF8">
    <property type="entry name" value="TPR REPEAT-CONTAINING PROTEIN MJ0263"/>
    <property type="match status" value="1"/>
</dbReference>
<dbReference type="Pfam" id="PF00515">
    <property type="entry name" value="TPR_1"/>
    <property type="match status" value="1"/>
</dbReference>
<dbReference type="SMART" id="SM00028">
    <property type="entry name" value="TPR"/>
    <property type="match status" value="3"/>
</dbReference>
<dbReference type="SUPFAM" id="SSF48452">
    <property type="entry name" value="TPR-like"/>
    <property type="match status" value="1"/>
</dbReference>
<dbReference type="PROSITE" id="PS50005">
    <property type="entry name" value="TPR"/>
    <property type="match status" value="3"/>
</dbReference>
<dbReference type="PROSITE" id="PS50293">
    <property type="entry name" value="TPR_REGION"/>
    <property type="match status" value="1"/>
</dbReference>
<name>YCF3_CALFG</name>
<keyword id="KW-0150">Chloroplast</keyword>
<keyword id="KW-0472">Membrane</keyword>
<keyword id="KW-0602">Photosynthesis</keyword>
<keyword id="KW-0934">Plastid</keyword>
<keyword id="KW-0677">Repeat</keyword>
<keyword id="KW-0793">Thylakoid</keyword>
<keyword id="KW-0802">TPR repeat</keyword>
<proteinExistence type="inferred from homology"/>